<protein>
    <recommendedName>
        <fullName evidence="1">UDP-N-acetylglucosamine 1-carboxyvinyltransferase</fullName>
        <ecNumber evidence="1">2.5.1.7</ecNumber>
    </recommendedName>
    <alternativeName>
        <fullName evidence="1">Enoylpyruvate transferase</fullName>
    </alternativeName>
    <alternativeName>
        <fullName evidence="1">UDP-N-acetylglucosamine enolpyruvyl transferase</fullName>
        <shortName evidence="1">EPT</shortName>
    </alternativeName>
</protein>
<sequence length="421" mass="44501">MDSILVTGNGPLNGQIPIAGAKNACLTLMPATLLSDEPLTLTNAPRLSDIKTMTLLLQSLGAEVSSLQDGKVLAMSSHDLTSHTADYDIVRKMRASNLVLGPMLARLGQAVVSLPGGCAIGARPMDLHIEALEALGAEIELRDGYLHAKAPGGLKGAVHEMRFASVGATENMVMAATLAKGTTVLKNAAREPEIVDLVRCLRAMGAQIEGEGTSTIEIQGVDRLHGATHQVVTDRIELGTYMLAPAICGGEVELLGGRLDLVGAFVEKLDAAGIDVAETDKGLKVSRRNGRVSAVNVTTEPFPGFPTDLQAQMMALLCTAEGTSVLEEKIFENRFMHAPELTRMGARIEVHGGTATVRGVERLKGAPVMATDLRASVSLILAGLAAEGETLVSRVYHLDRGYEHVVQKLEAVGARIERIKG</sequence>
<organism>
    <name type="scientific">Ruegeria pomeroyi (strain ATCC 700808 / DSM 15171 / DSS-3)</name>
    <name type="common">Silicibacter pomeroyi</name>
    <dbReference type="NCBI Taxonomy" id="246200"/>
    <lineage>
        <taxon>Bacteria</taxon>
        <taxon>Pseudomonadati</taxon>
        <taxon>Pseudomonadota</taxon>
        <taxon>Alphaproteobacteria</taxon>
        <taxon>Rhodobacterales</taxon>
        <taxon>Roseobacteraceae</taxon>
        <taxon>Ruegeria</taxon>
    </lineage>
</organism>
<feature type="chain" id="PRO_0000231264" description="UDP-N-acetylglucosamine 1-carboxyvinyltransferase">
    <location>
        <begin position="1"/>
        <end position="421"/>
    </location>
</feature>
<feature type="active site" description="Proton donor" evidence="1">
    <location>
        <position position="118"/>
    </location>
</feature>
<feature type="binding site" evidence="1">
    <location>
        <begin position="22"/>
        <end position="23"/>
    </location>
    <ligand>
        <name>phosphoenolpyruvate</name>
        <dbReference type="ChEBI" id="CHEBI:58702"/>
    </ligand>
</feature>
<feature type="binding site" evidence="1">
    <location>
        <position position="94"/>
    </location>
    <ligand>
        <name>UDP-N-acetyl-alpha-D-glucosamine</name>
        <dbReference type="ChEBI" id="CHEBI:57705"/>
    </ligand>
</feature>
<feature type="binding site" evidence="1">
    <location>
        <begin position="123"/>
        <end position="127"/>
    </location>
    <ligand>
        <name>UDP-N-acetyl-alpha-D-glucosamine</name>
        <dbReference type="ChEBI" id="CHEBI:57705"/>
    </ligand>
</feature>
<feature type="binding site" evidence="1">
    <location>
        <position position="308"/>
    </location>
    <ligand>
        <name>UDP-N-acetyl-alpha-D-glucosamine</name>
        <dbReference type="ChEBI" id="CHEBI:57705"/>
    </ligand>
</feature>
<feature type="binding site" evidence="1">
    <location>
        <position position="330"/>
    </location>
    <ligand>
        <name>UDP-N-acetyl-alpha-D-glucosamine</name>
        <dbReference type="ChEBI" id="CHEBI:57705"/>
    </ligand>
</feature>
<feature type="modified residue" description="2-(S-cysteinyl)pyruvic acid O-phosphothioketal" evidence="1">
    <location>
        <position position="118"/>
    </location>
</feature>
<gene>
    <name evidence="1" type="primary">murA</name>
    <name type="ordered locus">SPOA0137</name>
</gene>
<name>MURA_RUEPO</name>
<evidence type="ECO:0000255" key="1">
    <source>
        <dbReference type="HAMAP-Rule" id="MF_00111"/>
    </source>
</evidence>
<keyword id="KW-0131">Cell cycle</keyword>
<keyword id="KW-0132">Cell division</keyword>
<keyword id="KW-0133">Cell shape</keyword>
<keyword id="KW-0961">Cell wall biogenesis/degradation</keyword>
<keyword id="KW-0963">Cytoplasm</keyword>
<keyword id="KW-0573">Peptidoglycan synthesis</keyword>
<keyword id="KW-0614">Plasmid</keyword>
<keyword id="KW-0670">Pyruvate</keyword>
<keyword id="KW-1185">Reference proteome</keyword>
<keyword id="KW-0808">Transferase</keyword>
<reference key="1">
    <citation type="journal article" date="2004" name="Nature">
        <title>Genome sequence of Silicibacter pomeroyi reveals adaptations to the marine environment.</title>
        <authorList>
            <person name="Moran M.A."/>
            <person name="Buchan A."/>
            <person name="Gonzalez J.M."/>
            <person name="Heidelberg J.F."/>
            <person name="Whitman W.B."/>
            <person name="Kiene R.P."/>
            <person name="Henriksen J.R."/>
            <person name="King G.M."/>
            <person name="Belas R."/>
            <person name="Fuqua C."/>
            <person name="Brinkac L.M."/>
            <person name="Lewis M."/>
            <person name="Johri S."/>
            <person name="Weaver B."/>
            <person name="Pai G."/>
            <person name="Eisen J.A."/>
            <person name="Rahe E."/>
            <person name="Sheldon W.M."/>
            <person name="Ye W."/>
            <person name="Miller T.R."/>
            <person name="Carlton J."/>
            <person name="Rasko D.A."/>
            <person name="Paulsen I.T."/>
            <person name="Ren Q."/>
            <person name="Daugherty S.C."/>
            <person name="DeBoy R.T."/>
            <person name="Dodson R.J."/>
            <person name="Durkin A.S."/>
            <person name="Madupu R."/>
            <person name="Nelson W.C."/>
            <person name="Sullivan S.A."/>
            <person name="Rosovitz M.J."/>
            <person name="Haft D.H."/>
            <person name="Selengut J."/>
            <person name="Ward N."/>
        </authorList>
    </citation>
    <scope>NUCLEOTIDE SEQUENCE [LARGE SCALE GENOMIC DNA]</scope>
    <source>
        <strain>ATCC 700808 / DSM 15171 / DSS-3</strain>
    </source>
</reference>
<reference key="2">
    <citation type="journal article" date="2014" name="Stand. Genomic Sci.">
        <title>An updated genome annotation for the model marine bacterium Ruegeria pomeroyi DSS-3.</title>
        <authorList>
            <person name="Rivers A.R."/>
            <person name="Smith C.B."/>
            <person name="Moran M.A."/>
        </authorList>
    </citation>
    <scope>GENOME REANNOTATION</scope>
    <source>
        <strain>ATCC 700808 / DSM 15171 / DSS-3</strain>
    </source>
</reference>
<geneLocation type="plasmid">
    <name>megaplasmid Spo</name>
</geneLocation>
<comment type="function">
    <text evidence="1">Cell wall formation. Adds enolpyruvyl to UDP-N-acetylglucosamine.</text>
</comment>
<comment type="catalytic activity">
    <reaction evidence="1">
        <text>phosphoenolpyruvate + UDP-N-acetyl-alpha-D-glucosamine = UDP-N-acetyl-3-O-(1-carboxyvinyl)-alpha-D-glucosamine + phosphate</text>
        <dbReference type="Rhea" id="RHEA:18681"/>
        <dbReference type="ChEBI" id="CHEBI:43474"/>
        <dbReference type="ChEBI" id="CHEBI:57705"/>
        <dbReference type="ChEBI" id="CHEBI:58702"/>
        <dbReference type="ChEBI" id="CHEBI:68483"/>
        <dbReference type="EC" id="2.5.1.7"/>
    </reaction>
</comment>
<comment type="pathway">
    <text evidence="1">Cell wall biogenesis; peptidoglycan biosynthesis.</text>
</comment>
<comment type="subcellular location">
    <subcellularLocation>
        <location evidence="1">Cytoplasm</location>
    </subcellularLocation>
</comment>
<comment type="similarity">
    <text evidence="1">Belongs to the EPSP synthase family. MurA subfamily.</text>
</comment>
<dbReference type="EC" id="2.5.1.7" evidence="1"/>
<dbReference type="EMBL" id="CP000032">
    <property type="protein sequence ID" value="AAV97273.1"/>
    <property type="molecule type" value="Genomic_DNA"/>
</dbReference>
<dbReference type="RefSeq" id="WP_011241918.1">
    <property type="nucleotide sequence ID" value="NC_006569.1"/>
</dbReference>
<dbReference type="SMR" id="Q5LL90"/>
<dbReference type="PaxDb" id="246200-SPOA0137"/>
<dbReference type="KEGG" id="sil:SPOA0137"/>
<dbReference type="eggNOG" id="COG0766">
    <property type="taxonomic scope" value="Bacteria"/>
</dbReference>
<dbReference type="HOGENOM" id="CLU_027387_0_0_5"/>
<dbReference type="OrthoDB" id="9803760at2"/>
<dbReference type="UniPathway" id="UPA00219"/>
<dbReference type="Proteomes" id="UP000001023">
    <property type="component" value="Plasmid megaplasmid"/>
</dbReference>
<dbReference type="GO" id="GO:0005737">
    <property type="term" value="C:cytoplasm"/>
    <property type="evidence" value="ECO:0007669"/>
    <property type="project" value="UniProtKB-SubCell"/>
</dbReference>
<dbReference type="GO" id="GO:0008760">
    <property type="term" value="F:UDP-N-acetylglucosamine 1-carboxyvinyltransferase activity"/>
    <property type="evidence" value="ECO:0007669"/>
    <property type="project" value="UniProtKB-UniRule"/>
</dbReference>
<dbReference type="GO" id="GO:0051301">
    <property type="term" value="P:cell division"/>
    <property type="evidence" value="ECO:0007669"/>
    <property type="project" value="UniProtKB-KW"/>
</dbReference>
<dbReference type="GO" id="GO:0071555">
    <property type="term" value="P:cell wall organization"/>
    <property type="evidence" value="ECO:0007669"/>
    <property type="project" value="UniProtKB-KW"/>
</dbReference>
<dbReference type="GO" id="GO:0009252">
    <property type="term" value="P:peptidoglycan biosynthetic process"/>
    <property type="evidence" value="ECO:0007669"/>
    <property type="project" value="UniProtKB-UniRule"/>
</dbReference>
<dbReference type="GO" id="GO:0008360">
    <property type="term" value="P:regulation of cell shape"/>
    <property type="evidence" value="ECO:0007669"/>
    <property type="project" value="UniProtKB-KW"/>
</dbReference>
<dbReference type="GO" id="GO:0019277">
    <property type="term" value="P:UDP-N-acetylgalactosamine biosynthetic process"/>
    <property type="evidence" value="ECO:0007669"/>
    <property type="project" value="InterPro"/>
</dbReference>
<dbReference type="CDD" id="cd01555">
    <property type="entry name" value="UdpNAET"/>
    <property type="match status" value="1"/>
</dbReference>
<dbReference type="FunFam" id="3.65.10.10:FF:000001">
    <property type="entry name" value="UDP-N-acetylglucosamine 1-carboxyvinyltransferase"/>
    <property type="match status" value="1"/>
</dbReference>
<dbReference type="Gene3D" id="3.65.10.10">
    <property type="entry name" value="Enolpyruvate transferase domain"/>
    <property type="match status" value="2"/>
</dbReference>
<dbReference type="HAMAP" id="MF_00111">
    <property type="entry name" value="MurA"/>
    <property type="match status" value="1"/>
</dbReference>
<dbReference type="InterPro" id="IPR001986">
    <property type="entry name" value="Enolpyruvate_Tfrase_dom"/>
</dbReference>
<dbReference type="InterPro" id="IPR036968">
    <property type="entry name" value="Enolpyruvate_Tfrase_sf"/>
</dbReference>
<dbReference type="InterPro" id="IPR050068">
    <property type="entry name" value="MurA_subfamily"/>
</dbReference>
<dbReference type="InterPro" id="IPR013792">
    <property type="entry name" value="RNA3'P_cycl/enolpyr_Trfase_a/b"/>
</dbReference>
<dbReference type="InterPro" id="IPR005750">
    <property type="entry name" value="UDP_GlcNAc_COvinyl_MurA"/>
</dbReference>
<dbReference type="NCBIfam" id="TIGR01072">
    <property type="entry name" value="murA"/>
    <property type="match status" value="1"/>
</dbReference>
<dbReference type="NCBIfam" id="NF006873">
    <property type="entry name" value="PRK09369.1"/>
    <property type="match status" value="1"/>
</dbReference>
<dbReference type="PANTHER" id="PTHR43783">
    <property type="entry name" value="UDP-N-ACETYLGLUCOSAMINE 1-CARBOXYVINYLTRANSFERASE"/>
    <property type="match status" value="1"/>
</dbReference>
<dbReference type="PANTHER" id="PTHR43783:SF1">
    <property type="entry name" value="UDP-N-ACETYLGLUCOSAMINE 1-CARBOXYVINYLTRANSFERASE"/>
    <property type="match status" value="1"/>
</dbReference>
<dbReference type="Pfam" id="PF00275">
    <property type="entry name" value="EPSP_synthase"/>
    <property type="match status" value="1"/>
</dbReference>
<dbReference type="SUPFAM" id="SSF55205">
    <property type="entry name" value="EPT/RTPC-like"/>
    <property type="match status" value="1"/>
</dbReference>
<accession>Q5LL90</accession>
<proteinExistence type="inferred from homology"/>